<feature type="chain" id="PRO_0000215113" description="Major pollen allergen Ole e 1">
    <location>
        <begin position="1"/>
        <end position="145"/>
    </location>
</feature>
<feature type="glycosylation site" description="N-linked (GlcNAc...) (complex) asparagine; alternate">
    <location>
        <position position="111"/>
    </location>
</feature>
<feature type="glycosylation site" description="N-linked (GlcNAc...) (high mannose) asparagine; alternate">
    <location>
        <position position="111"/>
    </location>
</feature>
<feature type="disulfide bond" evidence="2">
    <location>
        <begin position="19"/>
        <end position="90"/>
    </location>
</feature>
<feature type="disulfide bond" evidence="2">
    <location>
        <begin position="22"/>
        <end position="131"/>
    </location>
</feature>
<feature type="disulfide bond" evidence="2">
    <location>
        <begin position="43"/>
        <end position="78"/>
    </location>
</feature>
<feature type="sequence variant" description="In Ole e 1.0102, Ole e 1.0103 and Ole e 1.0105.">
    <original>I</original>
    <variation>V</variation>
    <location>
        <position position="3"/>
    </location>
</feature>
<feature type="sequence variant" description="In Ole e I.4.">
    <original>V</original>
    <variation>I</variation>
    <location>
        <position position="8"/>
    </location>
</feature>
<feature type="sequence variant" description="In Ole e I.4.">
    <original>H</original>
    <variation>Y</variation>
    <location>
        <position position="12"/>
    </location>
</feature>
<feature type="sequence variant" description="In strain: cv. Zard; variant 2. In Ole e I.4.">
    <original>I</original>
    <variation>V</variation>
    <location>
        <position position="13"/>
    </location>
</feature>
<feature type="sequence variant" description="In strain: cv. Bella de Espana; variants 1 and 2, cv. Loaime, cv. Lucio, cv. Menara; variants 1 and 2, cv. Picholine marocaine and cv. Picual; variant 1.">
    <original>Q</original>
    <variation>I</variation>
    <location>
        <position position="14"/>
    </location>
</feature>
<feature type="sequence variant" description="In strain: cv. Picual; variant 1.">
    <original>G</original>
    <variation>L</variation>
    <location>
        <position position="15"/>
    </location>
</feature>
<feature type="sequence variant" description="In strain: cv. Arbequina; variants 1 and 2 and cv. Bella de Espana; variant 3.">
    <original>G</original>
    <variation>Q</variation>
    <location>
        <position position="15"/>
    </location>
</feature>
<feature type="sequence variant" description="In strain: cv. Bella de Espana; variants 1 and 2, cv. Menara; variants 1 and 2 and cv. Picholine marocaine.">
    <original>G</original>
    <variation>R</variation>
    <location>
        <position position="15"/>
    </location>
</feature>
<feature type="sequence variant" description="In strain: cv. Picual; variant 3.">
    <original>G</original>
    <variation>S</variation>
    <location>
        <position position="15"/>
    </location>
</feature>
<feature type="sequence variant" description="In strain: cv. Loaime and cv. Picual; variant 2.">
    <original>G</original>
    <variation>W</variation>
    <location>
        <position position="15"/>
    </location>
</feature>
<feature type="sequence variant" description="In strain: cv. Arbequina; variant 1.">
    <original>Q</original>
    <variation>A</variation>
    <location>
        <position position="16"/>
    </location>
</feature>
<feature type="sequence variant" description="In strain: cv. Arbequina; variant 2, cv. Bella de Espana; variant 3 and cv. Picual; variant 3.">
    <original>Q</original>
    <variation>D</variation>
    <location>
        <position position="16"/>
    </location>
</feature>
<feature type="sequence variant" description="In strain: cv. Acebuche.">
    <original>Q</original>
    <variation>R</variation>
    <location>
        <position position="16"/>
    </location>
</feature>
<feature type="sequence variant" description="In strain: cv. Bella de Espana; variants 1 and 2, cv. Loaime, cv. Menara; variants 1 and 2, cv. Picholine marocaine and cv. Picual; variants 1 and 2.">
    <original>Q</original>
    <variation>T</variation>
    <location>
        <position position="16"/>
    </location>
</feature>
<feature type="sequence variant" description="In strain: cv. Rowghani; variant 3 and cv. Zard; variant 2.">
    <original>V</original>
    <variation>I</variation>
    <location>
        <position position="17"/>
    </location>
</feature>
<feature type="sequence variant" description="In strain: cv. Arbequina; variant 2, cv. Bella de Espana; variant 3, cv. Hojiblanca and cv. Picual; variant 3.">
    <original>V</original>
    <variation>S</variation>
    <location>
        <position position="17"/>
    </location>
</feature>
<feature type="sequence variant" description="In strain: cv. Acebuche.">
    <original>V</original>
    <variation>T</variation>
    <location>
        <position position="17"/>
    </location>
</feature>
<feature type="sequence variant" description="In strain: cv. Bella de Espana; variant 1.">
    <original>Y</original>
    <variation>F</variation>
    <location>
        <position position="18"/>
    </location>
</feature>
<feature type="sequence variant" description="In strain: cv. Menara; variant 2.">
    <original>Y</original>
    <variation>H</variation>
    <location>
        <position position="18"/>
    </location>
</feature>
<feature type="sequence variant" description="In strain: cv. Bella de Espana; variant 2 and cv. Picual; variant 2.">
    <original>Y</original>
    <variation>S</variation>
    <location>
        <position position="18"/>
    </location>
</feature>
<feature type="sequence variant" description="In strain: cv. Acebuche.">
    <original>Y</original>
    <variation>V</variation>
    <location>
        <position position="18"/>
    </location>
</feature>
<feature type="sequence variant" description="In strain: cv. Bella de Espana; variant 2.">
    <original>C</original>
    <variation>Q</variation>
    <location>
        <position position="19"/>
    </location>
</feature>
<feature type="sequence variant" description="In strain: cv. Arbequina; variant 2 and cv. Bella de Espana; variant 1.">
    <original>C</original>
    <variation>R</variation>
    <location>
        <position position="19"/>
    </location>
</feature>
<feature type="sequence variant" description="In strain: cv. Bella de Espana; variant 3.">
    <original>C</original>
    <variation>S</variation>
    <location>
        <position position="19"/>
    </location>
</feature>
<feature type="sequence variant" description="In strain: cv. Acebuche.">
    <original>C</original>
    <variation>T</variation>
    <location>
        <position position="19"/>
    </location>
</feature>
<feature type="sequence variant" description="In strain: cv. Acebuche and cv. Bella de Espana; variant 3.">
    <original>D</original>
    <variation>G</variation>
    <location>
        <position position="20"/>
    </location>
</feature>
<feature type="sequence variant" description="In strain: cv. Bella de Espana; variant 1.">
    <original>D</original>
    <variation>V</variation>
    <location>
        <position position="20"/>
    </location>
</feature>
<feature type="sequence variant" description="In strain: cv. Bella de Espana; variant 3.">
    <original>T</original>
    <variation>H</variation>
    <location>
        <position position="21"/>
    </location>
</feature>
<feature type="sequence variant" description="In strain: cv. Acebuche.">
    <original>T</original>
    <variation>Y</variation>
    <location>
        <position position="21"/>
    </location>
</feature>
<feature type="sequence variant" description="In strain: cv. Bella de Espana; variant 2.">
    <original>R</original>
    <variation>C</variation>
    <location>
        <position position="23"/>
    </location>
</feature>
<feature type="sequence variant">
    <original>R</original>
    <variation>P</variation>
    <location>
        <position position="23"/>
    </location>
</feature>
<feature type="sequence variant" description="In strain: cv. Rowghani; variant 3. In Ole e 1.0105.">
    <original>A</original>
    <variation>S</variation>
    <location>
        <position position="24"/>
    </location>
</feature>
<feature type="sequence variant" description="In Ole e I.4.">
    <original>A</original>
    <variation>T</variation>
    <location>
        <position position="24"/>
    </location>
</feature>
<feature type="sequence variant" description="In strain: cv. Bella de Espana; variants 1, 2 and 3 and cv. Rowghani; variants 3 and 4. In Ole e 1.0105, Ole e I.3 and Ole e I.4.">
    <original>G</original>
    <variation>R</variation>
    <location>
        <position position="25"/>
    </location>
</feature>
<feature type="sequence variant" description="In strain: cv. Zard; variant 2; 50% loss of IgG binding." evidence="4">
    <original>T</original>
    <variation>A</variation>
    <location>
        <position position="28"/>
    </location>
</feature>
<feature type="sequence variant" description="In Ole e I.4.">
    <original>L</original>
    <variation>F</variation>
    <location>
        <position position="30"/>
    </location>
</feature>
<feature type="sequence variant" description="In strain: cv. Zard; variant 2.">
    <original>P</original>
    <variation>L</variation>
    <location>
        <position position="35"/>
    </location>
</feature>
<feature type="sequence variant" description="In strain: cv. Bella de Espana; variants 1, 2 and 3, cv. Hojiblanca and cv. Zard; variant 2. In Ole e I.4.">
    <original>S</original>
    <variation>G</variation>
    <location>
        <position position="38"/>
    </location>
</feature>
<feature type="sequence variant" description="In strain: cv. Arbequina; variants 1 and 2, cv. Bella de Espana; variants 1, 2 and 3, cv. Hojiblanca, cv. Loaime, cv. Lucio, cv. Menara; variants 1 and 2, cv. Picholine marocaine, cv. Picual; variants 1 and 2, cv. Rowghani; variants 2, 3 and 4 and cv. Zard; variants 1 and 2. In Ole e 1.0102, Ole e 1.0103, Ole e 1.0105, Ole e I.3 and Ole e I.4.">
    <original>L</original>
    <variation>V</variation>
    <location>
        <position position="39"/>
    </location>
</feature>
<feature type="sequence variant" description="In strain: cv. Rowghani; variants 2, 3 and 4 and cv. Zard; variants 1 and 2. In Ole e 1.0105.">
    <original>K</original>
    <variation>R</variation>
    <location>
        <position position="44"/>
    </location>
</feature>
<feature type="sequence variant" description="In strain: cv. Zard; variant 1 and cv. Rowghani; variants 2 and 3. In Ole e 1.0105.">
    <original>D</original>
    <variation>E</variation>
    <location>
        <position position="45"/>
    </location>
</feature>
<feature type="sequence variant" description="In strain: cv. Bella de Espana; variants 1, 2 and 3, cv. Hojiblanca and cv. Rowghani; variant 4. In Ole e I.3 and Ole e I.4.">
    <original>K</original>
    <variation>G</variation>
    <location>
        <position position="46"/>
    </location>
</feature>
<feature type="sequence variant">
    <original>K</original>
    <variation>I</variation>
    <location>
        <position position="46"/>
    </location>
</feature>
<feature type="sequence variant" description="In strain: cv. Arbequina; variants 1 and 2.">
    <original>K</original>
    <variation>R</variation>
    <location>
        <position position="46"/>
    </location>
</feature>
<feature type="sequence variant" description="In strain: cv. Zard; variant 2.">
    <original>K</original>
    <variation>S</variation>
    <location>
        <position position="46"/>
    </location>
</feature>
<feature type="sequence variant" description="In strain: cv. Rowghani; variant 2 and cv. Zard; variants 1 and 2.">
    <original>E</original>
    <variation>K</variation>
    <location>
        <position position="47"/>
    </location>
</feature>
<feature type="sequence variant" description="In strain: cv. Zard; variant 2.">
    <original>N</original>
    <variation>K</variation>
    <location>
        <position position="48"/>
    </location>
</feature>
<feature type="sequence variant" description="In Ole e I.4.">
    <original>D</original>
    <variation>K</variation>
    <location>
        <position position="50"/>
    </location>
</feature>
<feature type="sequence variant" description="In strain: cv. Bella de Espana; variants 1, 2 and 3, cv. Hojiblanca and cv. Zard; variant 2.">
    <original>D</original>
    <variation>N</variation>
    <location>
        <position position="50"/>
    </location>
</feature>
<feature type="sequence variant" description="In strain: cv. Rowghani; variant 4. In Ole e I.3.">
    <original>D</original>
    <variation>S</variation>
    <location>
        <position position="50"/>
    </location>
</feature>
<feature type="sequence variant" description="In strain: cv. Arbequina; variants 1 and 2, cv. Hojiblanca, cv. Loaime, cv. Lucio, cv. Menara; variants 1 and 2, cv. Picholine marocaine, cv. Picual; variants 1 and 2, cv. Rowghani, variants 2, 3 and 4 and cv. Zard; variants 1 and 2. In Ole e 1.0105, Ole e I.3 and Ole e I.4.">
    <original>V</original>
    <variation>I</variation>
    <location>
        <position position="51"/>
    </location>
</feature>
<feature type="sequence variant" description="In strain: cv. Rowghani; variant 3. In Ole e 1.0102, 1.0103 and 1.0105.">
    <original>V</original>
    <variation>I</variation>
    <location>
        <position position="56"/>
    </location>
</feature>
<feature type="sequence variant" description="In strain: cv. Rowghani; variant 4.">
    <original>Y</original>
    <variation>S</variation>
    <location>
        <position position="58"/>
    </location>
</feature>
<feature type="sequence variant" description="In strain: cv. Bella de Espana; variants 1, 2 and 3, cv. Rowghani; variant 4 and cv. Zard; variant 2. In Ole e I.3 and Ole e I.4.">
    <original>V</original>
    <variation>I</variation>
    <location>
        <position position="69"/>
    </location>
</feature>
<feature type="sequence variant" description="In strain: cv. Rowghani; variant 4. In Ole e I.3.">
    <original>N</original>
    <variation>D</variation>
    <location>
        <position position="75"/>
    </location>
</feature>
<feature type="sequence variant" description="In strain: cv. Zard; variant 2.">
    <original>I</original>
    <variation>V</variation>
    <location>
        <position position="80"/>
    </location>
</feature>
<feature type="sequence variant" description="In strain: cv. Zard; variant 2.">
    <original>T</original>
    <variation>N</variation>
    <location>
        <position position="81"/>
    </location>
</feature>
<feature type="sequence variant" description="In strain: cv. Zard; variant 2.">
    <original>L</original>
    <variation>S</variation>
    <location>
        <position position="82"/>
    </location>
</feature>
<feature type="sequence variant" description="In strain: cv. Bella de Espana; variants 1, 2 and 3 and cv. Zard; variant 2. In Ole e I.4.">
    <original>I</original>
    <variation>L</variation>
    <location>
        <position position="83"/>
    </location>
</feature>
<feature type="sequence variant" description="In strain: cv. Bella de Espana; variants 1, 2 and 3, cv. Rowghani; variant 4 and cv. Zard; variant 2. In Ole e I.3 and Ole e I.4.">
    <original>G</original>
    <variation>S</variation>
    <location>
        <position position="86"/>
    </location>
</feature>
<feature type="sequence variant">
    <original>R</original>
    <variation>S</variation>
    <location>
        <position position="87"/>
    </location>
</feature>
<feature type="sequence variant" description="In strain: cv. Arbequina; variants 1 and 2, cv. Bella de Espana; variants 1, 2 and 3, cv. Hojiblanca, cv. Loaime, cv. Picual; variants 1 and 2, cv. Rowghani; variants 3 and 4 and cv. Zard; variant 2. In Ole e 1.0105, Ole e I.3 and Ole e I.4.">
    <original>N</original>
    <variation>D</variation>
    <location>
        <position position="91"/>
    </location>
</feature>
<feature type="sequence variant" description="In strain: cv. Rowghani; variant 3 and cv. Zard; variant 2. In Ole e 1.0105.">
    <original>T</original>
    <variation>I</variation>
    <location>
        <position position="95"/>
    </location>
</feature>
<feature type="sequence variant" description="In strain: cv. Bella de Espana; variants 1, 2 and 3 and cv. Rowghani; variant 4. In Ole e I.3.">
    <original>T</original>
    <variation>V</variation>
    <location>
        <position position="95"/>
    </location>
</feature>
<feature type="sequence variant" description="In strain: cv. Acebuche, cv. Arbequina; variants 1 and 2, cv. Bella de Espana; variants 1, 2 and 3, cv. Hojiblanca, cv. Picual; variant 3, cv. Rowghani; variants 1 and 4 and cv. Zard; variant 2. In Ole e I.2, Ole e I.3 and Ole e I.4.">
    <original>A</original>
    <variation>V</variation>
    <location>
        <position position="99"/>
    </location>
</feature>
<feature type="sequence variant" description="In strain: cv. Zard; variant 2.">
    <original>K</original>
    <variation>R</variation>
    <location>
        <position position="100"/>
    </location>
</feature>
<feature type="sequence variant" description="In Ole e I.4.">
    <original>L</original>
    <variation>V</variation>
    <location>
        <position position="103"/>
    </location>
</feature>
<feature type="sequence variant" description="In strain: cv. Zard; variant 2.">
    <original>K</original>
    <variation>R</variation>
    <location>
        <position position="104"/>
    </location>
</feature>
<feature type="sequence variant" description="In strain: cv. Acebuche, cv. Arbequina; variant 1 and 2, cv. Hojiblanca, cv. Loaime, cv. Lucio, cv. Menara; variants 1 and 2, cv. Picholine marocaine, cv. Picual; variants 1, 2 and 3, cv. Rowghani; variants 1, 2 and 3 and cv. Zard; variant 1. In Ole e 1.0102, Ole e 1.0103, Ole e 1.0105, Ole e I.2 and Ole e I.4." evidence="6">
    <original>K</original>
    <variation>I</variation>
    <location>
        <position position="106"/>
    </location>
</feature>
<feature type="sequence variant" description="In strain: cv. Zard; variant 2.">
    <original>K</original>
    <variation>L</variation>
    <location>
        <position position="106"/>
    </location>
</feature>
<feature type="sequence variant" description="In strain: cv. Bella de Espana; variants 1, 2 and 3 and cv. Rowghani; variant 4. In Ole e I.3.">
    <original>K</original>
    <variation>M</variation>
    <location>
        <position position="106"/>
    </location>
</feature>
<feature type="sequence variant" description="In Ole e 1.0103.">
    <original>N</original>
    <variation>S</variation>
    <location>
        <position position="108"/>
    </location>
</feature>
<feature type="sequence variant">
    <original>N</original>
    <variation>D</variation>
    <location>
        <position position="111"/>
    </location>
</feature>
<feature type="sequence variant" description="In strain: cv. Zard; variant 2.">
    <original>R</original>
    <variation>C</variation>
    <location>
        <position position="115"/>
    </location>
</feature>
<feature type="sequence variant" description="In strain: cv. Bella de Espana; variants 1, 2 and 3, cv. Hojiblanca, cv. Rowghani; variant 2 and cv. Zard; variants 1 and 2. In Ole e I.3 and Ole e I.4.">
    <original>V</original>
    <variation>I</variation>
    <location>
        <position position="117"/>
    </location>
</feature>
<feature type="sequence variant" description="In strain: cv. Zard; variant 2.">
    <original>N</original>
    <variation>K</variation>
    <location>
        <position position="118"/>
    </location>
</feature>
<feature type="sequence variant" description="In Ole e 1.0102.">
    <original>G</original>
    <variation>R</variation>
    <location>
        <position position="121"/>
    </location>
</feature>
<feature type="sequence variant" description="In strain: cv. Zard; variant 1 and cv. Rowghani; variant 2. In Ole e 1.0102 and Ole e 1.0103.">
    <original>F</original>
    <variation>Y</variation>
    <location>
        <position position="123"/>
    </location>
</feature>
<feature type="sequence variant" description="In strain: cv. Zard; variant 2.">
    <original>K</original>
    <variation>N</variation>
    <location>
        <position position="125"/>
    </location>
</feature>
<feature type="sequence variant" description="In strain: cv. Zard; variant 2.">
    <original>E</original>
    <variation>K</variation>
    <location>
        <position position="126"/>
    </location>
</feature>
<feature type="sequence variant" description="In strain: cv. Bella de Espana; variants 1, 2 and 3, cv. Rowghani; variant 4 and cv. Zard; variant 2. In Ole e I.3 and Ole e I.4.">
    <original>A</original>
    <variation>P</variation>
    <location>
        <position position="132"/>
    </location>
</feature>
<feature type="sequence variant" description="In strain: cv. Bella de Espana; variants 1, 2 and 3, cv. Rowghani; variant 4 and cv. Zard; variant 2. In Ole e I.3 and Ole e I.4.">
    <original>Y</original>
    <variation>F</variation>
    <location>
        <position position="135"/>
    </location>
</feature>
<feature type="sequence variant" description="In strain: cv. Rowghani; variant 2.">
    <original>G</original>
    <variation>D</variation>
    <location>
        <position position="139"/>
    </location>
</feature>
<feature type="sequence variant" description="In strain: cv. Bella de Espana; variants 1, 2 and 3, cv. Rowghani; variant 4 and cv. Zard; variant 2.">
    <original>N</original>
    <variation>D</variation>
    <location>
        <position position="144"/>
    </location>
</feature>
<feature type="sequence variant" description="In strain: cv. Picual; variant 3.">
    <original>N</original>
    <variation>T</variation>
    <location>
        <position position="144"/>
    </location>
</feature>
<feature type="sequence variant" description="In strain: cv. Acebuche.">
    <original>M</original>
    <variation>HGMSR</variation>
    <location>
        <position position="145"/>
    </location>
</feature>
<feature type="sequence variant" description="In strain: cv. Zard; variant 2.">
    <original>M</original>
    <variation>L</variation>
    <location>
        <position position="145"/>
    </location>
</feature>
<feature type="sequence variant" description="In strain: cv. Picual; variant 3.">
    <original>M</original>
    <variation>WNVTI</variation>
    <location>
        <position position="145"/>
    </location>
</feature>
<feature type="mutagenesis site" description="90% loss of IgG binding." evidence="4">
    <original>V</original>
    <variation>A</variation>
    <location>
        <position position="8"/>
    </location>
</feature>
<feature type="mutagenesis site" description="Loss of IgG binding." evidence="4">
    <original>S</original>
    <variation>A</variation>
    <location>
        <position position="9"/>
    </location>
</feature>
<feature type="mutagenesis site" description="Loss of IgG binding." evidence="4">
    <original>Q</original>
    <variation>A</variation>
    <location>
        <position position="10"/>
    </location>
</feature>
<feature type="mutagenesis site" description="Loss of IgG binding." evidence="4">
    <original>F</original>
    <variation>A</variation>
    <location>
        <position position="11"/>
    </location>
</feature>
<feature type="mutagenesis site" description="70% loss of IgG binding." evidence="4">
    <original>F</original>
    <variation>A</variation>
    <location>
        <position position="26"/>
    </location>
</feature>
<feature type="mutagenesis site" description="Loss of IgG binding." evidence="4">
    <original>E</original>
    <variation>A</variation>
    <location>
        <position position="29"/>
    </location>
</feature>
<feature type="mutagenesis site" description="50% loss of IgG binding." evidence="4">
    <original>L</original>
    <variation>A</variation>
    <location>
        <position position="30"/>
    </location>
</feature>
<feature type="mutagenesis site" description="Loss of IgG binding." evidence="4">
    <original>E</original>
    <variation>A</variation>
    <location>
        <position position="32"/>
    </location>
</feature>
<feature type="mutagenesis site" description="Loss of IgG binding." evidence="4">
    <original>F</original>
    <variation>A</variation>
    <location>
        <position position="33"/>
    </location>
</feature>
<feature type="mutagenesis site" description="50% loss of IgG binding." evidence="4">
    <original>I</original>
    <variation>A</variation>
    <location>
        <position position="34"/>
    </location>
</feature>
<feature type="mutagenesis site" description="50% loss of IgG binding." evidence="4">
    <original>G</original>
    <variation>A</variation>
    <location>
        <position position="49"/>
    </location>
</feature>
<feature type="mutagenesis site" description="60% loss of IgG binding." evidence="4">
    <original>D</original>
    <variation>A</variation>
    <location>
        <position position="50"/>
    </location>
</feature>
<feature type="mutagenesis site" description="50% loss of IgG binding." evidence="4">
    <original>V</original>
    <variation>A</variation>
    <location>
        <position position="51"/>
    </location>
</feature>
<feature type="mutagenesis site" description="Loss of IgG binding." evidence="4">
    <original>E</original>
    <variation>A</variation>
    <location>
        <position position="55"/>
    </location>
</feature>
<feature type="mutagenesis site" description="Loss of IgG binding." evidence="4">
    <original>V</original>
    <variation>A</variation>
    <location>
        <position position="56"/>
    </location>
</feature>
<feature type="mutagenesis site" description="Loss of IgG binding." evidence="4">
    <original>G</original>
    <variation>A</variation>
    <location>
        <position position="57"/>
    </location>
</feature>
<feature type="mutagenesis site" description="Loss of IgG binding." evidence="4">
    <original>Y</original>
    <variation>A</variation>
    <location>
        <position position="58"/>
    </location>
</feature>
<feature type="mutagenesis site" description="Loss of IgG binding." evidence="4">
    <original>T</original>
    <variation>A</variation>
    <location>
        <position position="59"/>
    </location>
</feature>
<feature type="mutagenesis site" description="60% loss of IgG binding." evidence="4">
    <original>R</original>
    <variation>A</variation>
    <location>
        <position position="60"/>
    </location>
</feature>
<feature type="mutagenesis site" description="70% loss of IgG binding." evidence="4">
    <original>Y</original>
    <variation>A</variation>
    <location>
        <position position="65"/>
    </location>
</feature>
<feature type="mutagenesis site" description="50% loss of IgG binding." evidence="4">
    <original>M</original>
    <variation>A</variation>
    <location>
        <position position="67"/>
    </location>
</feature>
<feature type="mutagenesis site" description="Loss of IgG binding." evidence="4">
    <original>E</original>
    <variation>A</variation>
    <location>
        <position position="70"/>
    </location>
</feature>
<feature type="mutagenesis site" description="Loss of IgG binding." evidence="4">
    <original>L</original>
    <variation>A</variation>
    <location>
        <position position="107"/>
    </location>
</feature>
<feature type="mutagenesis site" description="Loss of IgG binding." evidence="4">
    <original>N</original>
    <variation>A</variation>
    <location>
        <position position="108"/>
    </location>
</feature>
<feature type="mutagenesis site" description="Loss of IgG binding." evidence="4">
    <original>T</original>
    <variation>A</variation>
    <location>
        <position position="109"/>
    </location>
</feature>
<feature type="mutagenesis site" description="Loss of IgG binding." evidence="4">
    <original>V</original>
    <variation>A</variation>
    <location>
        <position position="110"/>
    </location>
</feature>
<feature type="mutagenesis site" description="Loss of IgG binding." evidence="4">
    <original>G</original>
    <variation>A</variation>
    <location>
        <position position="112"/>
    </location>
</feature>
<feature type="mutagenesis site" description="70% loss of IgG binding." evidence="4">
    <original>P</original>
    <variation>A</variation>
    <location>
        <position position="119"/>
    </location>
</feature>
<feature type="mutagenesis site" description="Loss of IgG binding." evidence="4">
    <original>L</original>
    <variation>A</variation>
    <location>
        <position position="120"/>
    </location>
</feature>
<feature type="mutagenesis site" description="Loss of IgG binding." evidence="4">
    <original>F</original>
    <variation>A</variation>
    <location>
        <position position="123"/>
    </location>
</feature>
<feature type="mutagenesis site" description="80% loss of IgG binding." evidence="4">
    <original>K</original>
    <variation>A</variation>
    <location>
        <position position="125"/>
    </location>
</feature>
<feature type="mutagenesis site" description="50% loss of IgG binding and 40% loss if IgE binding." evidence="4">
    <original>Q</original>
    <variation>A</variation>
    <location>
        <position position="133"/>
    </location>
</feature>
<feature type="mutagenesis site" description="30% loss of IgG binding and 50% loss if IgE binding." evidence="4">
    <original>V</original>
    <variation>A</variation>
    <location>
        <position position="134"/>
    </location>
</feature>
<feature type="mutagenesis site" description="No loss of IgG binding and 40% loss if IgE binding." evidence="4">
    <original>Y</original>
    <variation>A</variation>
    <location>
        <position position="135"/>
    </location>
</feature>
<feature type="mutagenesis site" description="Decreased IgE binding." evidence="5">
    <location>
        <begin position="136"/>
        <end position="145"/>
    </location>
</feature>
<feature type="mutagenesis site" description="40% loss of IgG binding and 60% loss if IgE binding." evidence="4">
    <original>N</original>
    <variation>A</variation>
    <location>
        <position position="136"/>
    </location>
</feature>
<feature type="mutagenesis site" description="20% loss of IgG binding and 80% loss if IgE binding." evidence="4">
    <original>K</original>
    <variation>A</variation>
    <location>
        <position position="137"/>
    </location>
</feature>
<feature type="mutagenesis site" description="70% loss of IgG binding and 90% loss if IgE binding." evidence="4">
    <original>L</original>
    <variation>A</variation>
    <location>
        <position position="138"/>
    </location>
</feature>
<feature type="mutagenesis site" description="30% loss of IgG binding and 90% loss if IgE binding." evidence="4">
    <original>G</original>
    <variation>A</variation>
    <location>
        <position position="139"/>
    </location>
</feature>
<feature type="mutagenesis site" description="50% loss of IgG binding and 50% loss if IgE binding." evidence="4">
    <original>M</original>
    <variation>A</variation>
    <location>
        <position position="140"/>
    </location>
</feature>
<feature type="mutagenesis site" description="Decreased IgE binding." evidence="5">
    <location>
        <begin position="141"/>
        <end position="145"/>
    </location>
</feature>
<feature type="mutagenesis site" description="90% loss of IgG binding and 95% loss if IgE binding." evidence="4 5">
    <original>Y</original>
    <variation>A</variation>
    <location>
        <position position="141"/>
    </location>
</feature>
<feature type="mutagenesis site" description="20% loss of IgG binding and 95% loss if IgE binding." evidence="4">
    <original>P</original>
    <variation>A</variation>
    <location>
        <position position="142"/>
    </location>
</feature>
<organism>
    <name type="scientific">Olea europaea</name>
    <name type="common">Common olive</name>
    <dbReference type="NCBI Taxonomy" id="4146"/>
    <lineage>
        <taxon>Eukaryota</taxon>
        <taxon>Viridiplantae</taxon>
        <taxon>Streptophyta</taxon>
        <taxon>Embryophyta</taxon>
        <taxon>Tracheophyta</taxon>
        <taxon>Spermatophyta</taxon>
        <taxon>Magnoliopsida</taxon>
        <taxon>eudicotyledons</taxon>
        <taxon>Gunneridae</taxon>
        <taxon>Pentapetalae</taxon>
        <taxon>asterids</taxon>
        <taxon>lamiids</taxon>
        <taxon>Lamiales</taxon>
        <taxon>Oleaceae</taxon>
        <taxon>Oleeae</taxon>
        <taxon>Olea</taxon>
    </lineage>
</organism>
<reference key="1">
    <citation type="journal article" date="1993" name="Eur. J. Biochem.">
        <title>The amino acid sequence of Ole e I, the major allergen from olive tree (Olea europaea) pollen.</title>
        <authorList>
            <person name="Villalba M."/>
            <person name="Batanero E."/>
            <person name="Lopez-Otin C."/>
            <person name="Sanchez L.M."/>
            <person name="Monsalve R.I."/>
            <person name="Gonzalez de la Pena M.A."/>
            <person name="Lahoz C."/>
            <person name="Rodriguez R."/>
        </authorList>
    </citation>
    <scope>PROTEIN SEQUENCE</scope>
    <source>
        <tissue>Pollen</tissue>
    </source>
</reference>
<reference key="2">
    <citation type="journal article" date="1994" name="J. Biol. Chem.">
        <title>Cloning and expression of Ole e I, the major allergen from olive tree pollen. Polymorphism analysis and tissue specificity.</title>
        <authorList>
            <person name="Villalba M."/>
            <person name="Batanero E."/>
            <person name="Monsalve R.I."/>
            <person name="Gonzalez de la Pena M.A."/>
            <person name="Lahoz C."/>
            <person name="Rodriguez R."/>
        </authorList>
    </citation>
    <scope>NUCLEOTIDE SEQUENCE [MRNA]</scope>
    <scope>VARIANTS OLE E I.2; OLE E I.3 AND OLE E I.4</scope>
    <source>
        <tissue>Pollen</tissue>
    </source>
</reference>
<reference key="3">
    <citation type="journal article" date="1997" name="J. Allergy Clin. Immunol.">
        <title>Cloning and expression of the panallergen profilin and the major allergen (Ole e 1) from olive tree pollen.</title>
        <authorList>
            <person name="Asturias J.A."/>
            <person name="Arilla M.C."/>
            <person name="Gomez-Bayon N."/>
            <person name="Martinez J."/>
            <person name="Martinez A."/>
            <person name="Palacios R."/>
        </authorList>
    </citation>
    <scope>NUCLEOTIDE SEQUENCE [MRNA]</scope>
    <scope>VARIANTS OLE E 1.0102; OLE E 1.0103 AND OLE E 1.0105</scope>
    <source>
        <tissue>Pollen</tissue>
    </source>
</reference>
<reference key="4">
    <citation type="journal article" date="1990" name="Biochem. Biophys. Res. Commun.">
        <title>Isolation of three allergenic fractions of the major allergen from Olea europea pollen and N-terminal amino acid sequence.</title>
        <authorList>
            <person name="Villalba M."/>
            <person name="Lopez-Otin C."/>
            <person name="Martin-Orozco E."/>
            <person name="Monsalve R.I."/>
            <person name="Palomino P."/>
            <person name="Lahoz C."/>
            <person name="Rodriguez R."/>
        </authorList>
    </citation>
    <scope>PROTEIN SEQUENCE OF 1-28</scope>
    <scope>VARIANTS</scope>
    <source>
        <tissue>Pollen</tissue>
    </source>
</reference>
<reference key="5">
    <citation type="journal article" date="2013" name="Iran. J. Allergy Asthma Immunol.">
        <title>Differential expression and sequence polymorphism of the olive pollen allergen Ole e 1 in two Iranian cultivars.</title>
        <authorList>
            <person name="Soleimani A."/>
            <person name="Morales S."/>
            <person name="Jimenez-Lopez J.C."/>
            <person name="Castro A.J."/>
            <person name="Rodriguez-Garcia M.I."/>
            <person name="de Dios Alche J."/>
        </authorList>
    </citation>
    <scope>NUCLEOTIDE SEQUENCE [MRNA] OF 6-145</scope>
    <scope>VARIANTS</scope>
    <source>
        <strain>cv. Rowghani</strain>
        <strain>Zard</strain>
    </source>
</reference>
<reference key="6">
    <citation type="journal article" date="2008" name="BMC Plant Biol.">
        <title>Olive cultivar origin is a major cause of polymorphism for Ole e 1 pollen allergen.</title>
        <authorList>
            <person name="Hamman-Khalifa A."/>
            <person name="Castro A.J."/>
            <person name="Jimenez-Lopez J.C."/>
            <person name="Rodriguez-Garcia M.I."/>
            <person name="Alche J.D."/>
        </authorList>
    </citation>
    <scope>NUCLEOTIDE SEQUENCE [GENOMIC DNA / MRNA] OF 14-145</scope>
    <scope>VARIANTS</scope>
    <source>
        <strain>cv. Acebuche</strain>
        <strain>cv. Arbequina</strain>
        <strain>cv. Bella de Espana</strain>
        <strain>cv. Hojiblanca</strain>
        <strain>cv. Loaime</strain>
        <strain>cv. Lucio</strain>
        <strain>cv. Menara</strain>
        <strain>cv. Picholine marocaine</strain>
        <strain>cv. Picual</strain>
    </source>
</reference>
<reference key="7">
    <citation type="journal article" date="1994" name="Clin. Exp. Allergy">
        <title>cDNA sequence analysis of the main olive allergen, Ole e I.</title>
        <authorList>
            <person name="Lombardero M."/>
            <person name="Barbas J.A."/>
            <person name="del Prado J."/>
            <person name="Carreira J."/>
        </authorList>
    </citation>
    <scope>NUCLEOTIDE SEQUENCE [MRNA] OF 16-145</scope>
    <scope>GLYCOSYLATION</scope>
    <source>
        <tissue>Pollen</tissue>
    </source>
</reference>
<reference key="8">
    <citation type="journal article" date="2000" name="J. Pept. Res.">
        <title>Assignment of the disulfide bonds of Ole e 1, a major allergen of olive tree pollen involved in fertilization.</title>
        <authorList>
            <person name="Gonzalez E."/>
            <person name="Monsalve R.I."/>
            <person name="Puente X.S."/>
            <person name="Villalba M."/>
            <person name="Rodriguez R."/>
        </authorList>
    </citation>
    <scope>PARTIAL PROTEIN SEQUENCE</scope>
    <scope>DISULFIDE BONDS</scope>
</reference>
<reference key="9">
    <citation type="journal article" date="1998" name="Clin. Exp. Allergy">
        <title>Olive pollen allergy: searching for immunodominant T-cell epitopes on the Ole e 1 molecule.</title>
        <authorList>
            <person name="Cardaba B."/>
            <person name="Del Pozo V."/>
            <person name="Jurado A."/>
            <person name="Gallardo S."/>
            <person name="Cortegano I."/>
            <person name="Arrieta I."/>
            <person name="Del Amo A."/>
            <person name="Tramon P."/>
            <person name="Florido F."/>
            <person name="Sastre J."/>
            <person name="Palomino P."/>
            <person name="Lahoz C."/>
        </authorList>
    </citation>
    <scope>CHARACTERIZATION</scope>
</reference>
<reference key="10">
    <citation type="journal article" date="1999" name="J. Cell Sci.">
        <title>The major olive pollen allergen (Ole e I) shows both gametophytic and sporophytic expression during anther development, and its synthesis and storage takes place in the RER.</title>
        <authorList>
            <person name="Alche J.D."/>
            <person name="Castro A.J."/>
            <person name="Olmedilla A."/>
            <person name="Fernandez M.C."/>
            <person name="Rodriguez R."/>
            <person name="Villalba M."/>
            <person name="Rodriguez-Garcia M.I."/>
        </authorList>
    </citation>
    <scope>DEVELOPMENTAL STAGE</scope>
    <scope>TISSUE SPECIFICITY</scope>
    <scope>SUBCELLULAR LOCATION</scope>
</reference>
<reference key="11">
    <citation type="journal article" date="2000" name="J. Biol. Chem.">
        <title>Beta(1,2)-xylose and alpha(1,3)-fucose residues have a strong contribution in IgE binding to plant glycoallergens.</title>
        <authorList>
            <person name="van Ree R."/>
            <person name="Cabanes-Macheteau M."/>
            <person name="Akkerdaas J."/>
            <person name="Milazzo J.-P."/>
            <person name="Loutelier-Bourhis C."/>
            <person name="Rayon C."/>
            <person name="Villalba M."/>
            <person name="Koppelman S."/>
            <person name="Aalberse R."/>
            <person name="Rodriguez R."/>
            <person name="Faye L."/>
            <person name="Lerouge P."/>
        </authorList>
    </citation>
    <scope>GLYCAN STRUCTURE</scope>
</reference>
<reference key="12">
    <citation type="journal article" date="2004" name="Plant Cell Physiol.">
        <title>Ole e 1, the major allergen from olive (Olea europaea L.) pollen, increases its expression and is released to the culture medium during in vitro germination.</title>
        <authorList>
            <person name="Alche J.D."/>
            <person name="M'rani-Alaoui M."/>
            <person name="Castro A.J."/>
            <person name="Rodriguez-Garcia M.I."/>
        </authorList>
    </citation>
    <scope>DEVELOPMENTAL STAGE</scope>
    <scope>SUBCELLULAR LOCATION</scope>
</reference>
<reference key="13">
    <citation type="journal article" date="2006" name="Mol. Immunol.">
        <title>Analysis of IgE and IgG B-cell immunodominant regions of Ole e 1, the main allergen from olive pollen.</title>
        <authorList>
            <person name="Gonzalez E.M."/>
            <person name="Villalba M."/>
            <person name="Quiralte J."/>
            <person name="Batanero E."/>
            <person name="Roncal F."/>
            <person name="Albar J.P."/>
            <person name="Rodriguez R."/>
        </authorList>
    </citation>
    <scope>MUTAGENESIS OF VAL-8; SER-9; GLN-10; PHE-11; PHE-26; GLU-29; LEU-30; GLU-32; PHE-33; ILE-34; GLY-49; ASP-50; VAL-51; GLU-55; VAL-56; GLY-57; TYR-58; THR-59; ARG-60; TYR-65; MET-67; GLU-70; LEU-107; ASN-108; THR-109; VAL-110; GLY-112; PRO-119; LEU-120; PHE-123; LYS-125; GLN-133; VAL-134; TYR-135; ASN-136; LYS-137; LEU-138; GLY-139; MET-140; TYR-141 AND PRO-142</scope>
    <scope>CHARACTERIZATION OF VARIANT ALA-28</scope>
</reference>
<reference key="14">
    <citation type="journal article" date="2007" name="Clin. Exp. Allergy">
        <title>Hypoallergenic mutants of Ole e 1, the major olive pollen allergen, as candidates for allergy vaccines.</title>
        <authorList>
            <person name="Marazuela E.G."/>
            <person name="Rodriguez R."/>
            <person name="Barber D."/>
            <person name="Villalba M."/>
            <person name="Batanero E."/>
        </authorList>
    </citation>
    <scope>MUTAGENESIS OF TYR-141; 136-ASN--MET-145 AND 141-TYR--MET-145</scope>
    <scope>ALLERGEN</scope>
</reference>
<reference key="15">
    <citation type="journal article" date="2008" name="J. Proteome Res.">
        <title>Vegetable proteomics: the detection of Ole e 1 isoallergens by peptide matching of MALDI MS/MS spectra of underivatized and dansylated glycopeptides.</title>
        <authorList>
            <person name="Napoli A."/>
            <person name="Aiello D."/>
            <person name="Di Donna L."/>
            <person name="Moschidis P."/>
            <person name="Sindona G."/>
        </authorList>
    </citation>
    <scope>GLYCOSYLATION</scope>
    <scope>VARIANT ILE-106</scope>
    <source>
        <strain>cv. Villacidro</strain>
    </source>
</reference>
<reference key="16">
    <citation type="journal article" date="2012" name="Talanta">
        <title>Analysis of olive allergens.</title>
        <authorList>
            <person name="Esteve C."/>
            <person name="Montealegre C."/>
            <person name="Marina M.L."/>
            <person name="Garcia M.C."/>
        </authorList>
    </citation>
    <scope>REVIEW</scope>
    <scope>NOMENCLATURE</scope>
</reference>
<name>ALL1_OLEEU</name>
<dbReference type="EMBL" id="Y12426">
    <property type="protein sequence ID" value="CAA73036.1"/>
    <property type="status" value="ALT_INIT"/>
    <property type="molecule type" value="mRNA"/>
</dbReference>
<dbReference type="EMBL" id="Y12427">
    <property type="protein sequence ID" value="CAA73037.1"/>
    <property type="status" value="ALT_INIT"/>
    <property type="molecule type" value="mRNA"/>
</dbReference>
<dbReference type="EMBL" id="Y12428">
    <property type="protein sequence ID" value="CAA73038.1"/>
    <property type="status" value="ALT_INIT"/>
    <property type="molecule type" value="mRNA"/>
</dbReference>
<dbReference type="EMBL" id="AF500908">
    <property type="protein sequence ID" value="AAQ07442.1"/>
    <property type="molecule type" value="mRNA"/>
</dbReference>
<dbReference type="EMBL" id="AF515277">
    <property type="protein sequence ID" value="AAQ08186.1"/>
    <property type="molecule type" value="mRNA"/>
</dbReference>
<dbReference type="EMBL" id="AF515278">
    <property type="protein sequence ID" value="AAQ08187.1"/>
    <property type="molecule type" value="mRNA"/>
</dbReference>
<dbReference type="EMBL" id="AF515279">
    <property type="protein sequence ID" value="AAQ08188.1"/>
    <property type="molecule type" value="mRNA"/>
</dbReference>
<dbReference type="EMBL" id="AF515280">
    <property type="protein sequence ID" value="AAQ08189.1"/>
    <property type="molecule type" value="mRNA"/>
</dbReference>
<dbReference type="EMBL" id="AF515281">
    <property type="protein sequence ID" value="AAQ08190.1"/>
    <property type="molecule type" value="mRNA"/>
</dbReference>
<dbReference type="EMBL" id="AF532753">
    <property type="protein sequence ID" value="AAQ10267.1"/>
    <property type="molecule type" value="mRNA"/>
</dbReference>
<dbReference type="EMBL" id="AF532754">
    <property type="protein sequence ID" value="AAQ10268.1"/>
    <property type="molecule type" value="mRNA"/>
</dbReference>
<dbReference type="EMBL" id="AF532755">
    <property type="protein sequence ID" value="AAQ10269.1"/>
    <property type="molecule type" value="mRNA"/>
</dbReference>
<dbReference type="EMBL" id="AF532756">
    <property type="protein sequence ID" value="AAQ10270.1"/>
    <property type="molecule type" value="mRNA"/>
</dbReference>
<dbReference type="EMBL" id="AF532757">
    <property type="protein sequence ID" value="AAQ10271.1"/>
    <property type="molecule type" value="mRNA"/>
</dbReference>
<dbReference type="EMBL" id="AF532758">
    <property type="protein sequence ID" value="AAQ10272.1"/>
    <property type="molecule type" value="mRNA"/>
</dbReference>
<dbReference type="EMBL" id="AF532759">
    <property type="protein sequence ID" value="AAQ10273.1"/>
    <property type="molecule type" value="mRNA"/>
</dbReference>
<dbReference type="EMBL" id="AF532760">
    <property type="protein sequence ID" value="AAQ10274.1"/>
    <property type="molecule type" value="mRNA"/>
</dbReference>
<dbReference type="EMBL" id="AF532761">
    <property type="protein sequence ID" value="AAQ10275.1"/>
    <property type="molecule type" value="mRNA"/>
</dbReference>
<dbReference type="EMBL" id="AF532762">
    <property type="protein sequence ID" value="AAQ10276.1"/>
    <property type="molecule type" value="mRNA"/>
</dbReference>
<dbReference type="EMBL" id="AF532763">
    <property type="protein sequence ID" value="AAQ10277.1"/>
    <property type="molecule type" value="mRNA"/>
</dbReference>
<dbReference type="EMBL" id="AF532764">
    <property type="protein sequence ID" value="AAQ10278.1"/>
    <property type="molecule type" value="mRNA"/>
</dbReference>
<dbReference type="EMBL" id="AF532765">
    <property type="protein sequence ID" value="AAQ10279.1"/>
    <property type="molecule type" value="mRNA"/>
</dbReference>
<dbReference type="EMBL" id="AF532766">
    <property type="protein sequence ID" value="AAQ10280.1"/>
    <property type="molecule type" value="mRNA"/>
</dbReference>
<dbReference type="EMBL" id="AF532767">
    <property type="protein sequence ID" value="AAQ10281.1"/>
    <property type="molecule type" value="mRNA"/>
</dbReference>
<dbReference type="EMBL" id="AY137467">
    <property type="protein sequence ID" value="AAN18042.1"/>
    <property type="molecule type" value="mRNA"/>
</dbReference>
<dbReference type="EMBL" id="AY137468">
    <property type="protein sequence ID" value="AAN18043.1"/>
    <property type="molecule type" value="mRNA"/>
</dbReference>
<dbReference type="EMBL" id="AY137469">
    <property type="protein sequence ID" value="AAN18044.1"/>
    <property type="molecule type" value="mRNA"/>
</dbReference>
<dbReference type="EMBL" id="AY159880">
    <property type="protein sequence ID" value="AAO22132.1"/>
    <property type="molecule type" value="Genomic_DNA"/>
</dbReference>
<dbReference type="EMBL" id="AY159881">
    <property type="protein sequence ID" value="AAO22133.1"/>
    <property type="molecule type" value="Genomic_DNA"/>
</dbReference>
<dbReference type="EMBL" id="EF541386">
    <property type="protein sequence ID" value="ABP58632.1"/>
    <property type="molecule type" value="mRNA"/>
</dbReference>
<dbReference type="EMBL" id="EF541387">
    <property type="protein sequence ID" value="ABP58633.1"/>
    <property type="molecule type" value="mRNA"/>
</dbReference>
<dbReference type="EMBL" id="EF541388">
    <property type="protein sequence ID" value="ABP58634.1"/>
    <property type="molecule type" value="mRNA"/>
</dbReference>
<dbReference type="EMBL" id="EF541389">
    <property type="protein sequence ID" value="ABP58635.1"/>
    <property type="molecule type" value="mRNA"/>
</dbReference>
<dbReference type="EMBL" id="EF541390">
    <property type="protein sequence ID" value="ABP58636.1"/>
    <property type="molecule type" value="mRNA"/>
</dbReference>
<dbReference type="EMBL" id="EF541391">
    <property type="protein sequence ID" value="ABP58637.1"/>
    <property type="molecule type" value="mRNA"/>
</dbReference>
<dbReference type="EMBL" id="S75766">
    <property type="protein sequence ID" value="AAB32652.2"/>
    <property type="molecule type" value="mRNA"/>
</dbReference>
<dbReference type="PIR" id="A36153">
    <property type="entry name" value="A36153"/>
</dbReference>
<dbReference type="PIR" id="A53806">
    <property type="entry name" value="A53806"/>
</dbReference>
<dbReference type="PIR" id="D53806">
    <property type="entry name" value="D53806"/>
</dbReference>
<dbReference type="PIR" id="S36872">
    <property type="entry name" value="S36872"/>
</dbReference>
<dbReference type="SMR" id="P19963"/>
<dbReference type="Allergome" id="482">
    <property type="allergen name" value="Ole e 1"/>
</dbReference>
<dbReference type="Allergome" id="483">
    <property type="allergen name" value="Ole e 1.0101"/>
</dbReference>
<dbReference type="Allergome" id="487">
    <property type="allergen name" value="Ole e 1.0105"/>
</dbReference>
<dbReference type="Allergome" id="488">
    <property type="allergen name" value="Ole e 1.0106"/>
</dbReference>
<dbReference type="Allergome" id="489">
    <property type="allergen name" value="Ole e 1.0107"/>
</dbReference>
<dbReference type="GlyConnect" id="359">
    <property type="glycosylation" value="10 N-Linked glycans (1 site)"/>
</dbReference>
<dbReference type="GO" id="GO:0005783">
    <property type="term" value="C:endoplasmic reticulum"/>
    <property type="evidence" value="ECO:0007669"/>
    <property type="project" value="UniProtKB-SubCell"/>
</dbReference>
<dbReference type="GO" id="GO:0005615">
    <property type="term" value="C:extracellular space"/>
    <property type="evidence" value="ECO:0007669"/>
    <property type="project" value="InterPro"/>
</dbReference>
<dbReference type="InterPro" id="IPR006040">
    <property type="entry name" value="Allergen_Ole_e_I_CS"/>
</dbReference>
<dbReference type="InterPro" id="IPR006041">
    <property type="entry name" value="Pollen_Ole_e1_allergen"/>
</dbReference>
<dbReference type="PANTHER" id="PTHR31614:SF24">
    <property type="entry name" value="OLEE1-LIKE PROTEIN"/>
    <property type="match status" value="1"/>
</dbReference>
<dbReference type="PANTHER" id="PTHR31614">
    <property type="entry name" value="PROTEIN DOWNSTREAM OF FLC-RELATED"/>
    <property type="match status" value="1"/>
</dbReference>
<dbReference type="Pfam" id="PF01190">
    <property type="entry name" value="Pollen_Ole_e_1"/>
    <property type="match status" value="1"/>
</dbReference>
<dbReference type="PROSITE" id="PS00925">
    <property type="entry name" value="OLEEI"/>
    <property type="match status" value="1"/>
</dbReference>
<keyword id="KW-0020">Allergen</keyword>
<keyword id="KW-0903">Direct protein sequencing</keyword>
<keyword id="KW-1015">Disulfide bond</keyword>
<keyword id="KW-0256">Endoplasmic reticulum</keyword>
<keyword id="KW-0325">Glycoprotein</keyword>
<keyword id="KW-0964">Secreted</keyword>
<proteinExistence type="evidence at protein level"/>
<protein>
    <recommendedName>
        <fullName>Major pollen allergen Ole e 1</fullName>
    </recommendedName>
    <alternativeName>
        <fullName>Allergen Ole e I</fullName>
    </alternativeName>
    <allergenName>Ole e 1</allergenName>
</protein>
<evidence type="ECO:0000269" key="1">
    <source>
    </source>
</evidence>
<evidence type="ECO:0000269" key="2">
    <source>
    </source>
</evidence>
<evidence type="ECO:0000269" key="3">
    <source>
    </source>
</evidence>
<evidence type="ECO:0000269" key="4">
    <source>
    </source>
</evidence>
<evidence type="ECO:0000269" key="5">
    <source>
    </source>
</evidence>
<evidence type="ECO:0000269" key="6">
    <source>
    </source>
</evidence>
<evidence type="ECO:0000305" key="7"/>
<accession>P19963</accession>
<accession>A5A5K8</accession>
<accession>A5A5K9</accession>
<accession>A5A5L0</accession>
<accession>A5A5L1</accession>
<accession>A5A5L2</accession>
<accession>A5A5L3</accession>
<accession>O24166</accession>
<accession>O24167</accession>
<accession>O24168</accession>
<accession>Q41243</accession>
<accession>Q5DTB9</accession>
<accession>Q5DTC0</accession>
<accession>Q5DTC2</accession>
<accession>Q5DVQ3</accession>
<accession>Q5DVQ4</accession>
<accession>Q5DVQ5</accession>
<accession>Q5DVQ6</accession>
<accession>Q5DVQ7</accession>
<accession>Q5DVQ9</accession>
<accession>Q5DVR0</accession>
<accession>Q5DVR4</accession>
<accession>Q5DVR6</accession>
<accession>Q5DVS1</accession>
<accession>Q5DVS3</accession>
<sequence length="145" mass="16330">EDIPQPPVSQFHIQGQVYCDTCRAGFITELSEFIPGASLRLQCKDKENGDVTFTEVGYTRAEGLYSMLVERDHKNEFCEITLISSGRKDCNEIPTEGWAKPSLKFKLNTVNGTTRTVNPLGFFKKEALPKCAQVYNKLGMYPPNM</sequence>
<comment type="function">
    <text>May be involved in recognition between pollen-stigma and pollen tube-style cells.</text>
</comment>
<comment type="subcellular location">
    <subcellularLocation>
        <location>Endoplasmic reticulum</location>
    </subcellularLocation>
    <subcellularLocation>
        <location>Secreted</location>
    </subcellularLocation>
</comment>
<comment type="tissue specificity">
    <text evidence="1">Expressed in tapetum and pollen grains. Not detected in petals, roots or leaves.</text>
</comment>
<comment type="developmental stage">
    <text evidence="1 3">Expressed at late stages of pollen development. Up-regulated during pollen germination and pollen tube growth.</text>
</comment>
<comment type="domain">
    <text>Regions 91-102 and 109-130 are immunodominant T-cell epitopes. Mutations in the C-terminus (135-145) reduce allergenic activity but do not change the ability to stimulate allergen-specific T-cells.</text>
</comment>
<comment type="PTM">
    <text>N-glycosylated; contains high mannose (Man(7)-GlcNAc) and partially fucosylated complex glycans (GlcNAc-Man(3)-Xyl-GlcNAc). Complex glycans may contribute to the antigenicity. Exists both in a glycosylated and in a non-glycosylated form. Ole e 1 and Ole e 1.0103 are the only non-glycosylated isoallergens.</text>
</comment>
<comment type="PTM">
    <text>A second potential glycosylation site exists at position 50 in cv. Bella de Espana and cv. Hojiblanca.</text>
</comment>
<comment type="polymorphism">
    <text>Several isoforms of the allergen exist due to polymorphism.</text>
</comment>
<comment type="allergen">
    <text evidence="5">Causes an allergic reaction in human. Major allergen from olive pollen. Important in Mediterranean countries.</text>
</comment>
<comment type="miscellaneous">
    <text>Replacement of several other amino acids by Ala has little or no effect on IgG binding.</text>
</comment>
<comment type="similarity">
    <text evidence="7">Belongs to the Ole e I family.</text>
</comment>
<comment type="sequence caution" evidence="7">
    <conflict type="erroneous initiation">
        <sequence resource="EMBL-CDS" id="CAA73036"/>
    </conflict>
</comment>
<comment type="sequence caution" evidence="7">
    <conflict type="erroneous initiation">
        <sequence resource="EMBL-CDS" id="CAA73037"/>
    </conflict>
</comment>
<comment type="sequence caution" evidence="7">
    <conflict type="erroneous initiation">
        <sequence resource="EMBL-CDS" id="CAA73038"/>
    </conflict>
</comment>